<name>METAS_AERS4</name>
<organism>
    <name type="scientific">Aeromonas salmonicida (strain A449)</name>
    <dbReference type="NCBI Taxonomy" id="382245"/>
    <lineage>
        <taxon>Bacteria</taxon>
        <taxon>Pseudomonadati</taxon>
        <taxon>Pseudomonadota</taxon>
        <taxon>Gammaproteobacteria</taxon>
        <taxon>Aeromonadales</taxon>
        <taxon>Aeromonadaceae</taxon>
        <taxon>Aeromonas</taxon>
    </lineage>
</organism>
<dbReference type="EC" id="2.3.1.46" evidence="1"/>
<dbReference type="EMBL" id="CP000644">
    <property type="protein sequence ID" value="ABO91656.1"/>
    <property type="molecule type" value="Genomic_DNA"/>
</dbReference>
<dbReference type="SMR" id="A4SRY4"/>
<dbReference type="STRING" id="29491.GCA_000820065_04312"/>
<dbReference type="KEGG" id="asa:ASA_3695"/>
<dbReference type="eggNOG" id="COG1897">
    <property type="taxonomic scope" value="Bacteria"/>
</dbReference>
<dbReference type="HOGENOM" id="CLU_057851_0_1_6"/>
<dbReference type="UniPathway" id="UPA00051">
    <property type="reaction ID" value="UER00075"/>
</dbReference>
<dbReference type="Proteomes" id="UP000000225">
    <property type="component" value="Chromosome"/>
</dbReference>
<dbReference type="GO" id="GO:0005737">
    <property type="term" value="C:cytoplasm"/>
    <property type="evidence" value="ECO:0007669"/>
    <property type="project" value="UniProtKB-SubCell"/>
</dbReference>
<dbReference type="GO" id="GO:0004414">
    <property type="term" value="F:homoserine O-acetyltransferase activity"/>
    <property type="evidence" value="ECO:0007669"/>
    <property type="project" value="UniProtKB-UniRule"/>
</dbReference>
<dbReference type="GO" id="GO:0008899">
    <property type="term" value="F:homoserine O-succinyltransferase activity"/>
    <property type="evidence" value="ECO:0007669"/>
    <property type="project" value="UniProtKB-EC"/>
</dbReference>
<dbReference type="GO" id="GO:0019281">
    <property type="term" value="P:L-methionine biosynthetic process from homoserine via O-succinyl-L-homoserine and cystathionine"/>
    <property type="evidence" value="ECO:0007669"/>
    <property type="project" value="InterPro"/>
</dbReference>
<dbReference type="CDD" id="cd03131">
    <property type="entry name" value="GATase1_HTS"/>
    <property type="match status" value="1"/>
</dbReference>
<dbReference type="FunFam" id="3.40.50.880:FF:000004">
    <property type="entry name" value="Homoserine O-succinyltransferase"/>
    <property type="match status" value="1"/>
</dbReference>
<dbReference type="Gene3D" id="3.40.50.880">
    <property type="match status" value="1"/>
</dbReference>
<dbReference type="HAMAP" id="MF_00295">
    <property type="entry name" value="MetA_acyltransf"/>
    <property type="match status" value="1"/>
</dbReference>
<dbReference type="InterPro" id="IPR029062">
    <property type="entry name" value="Class_I_gatase-like"/>
</dbReference>
<dbReference type="InterPro" id="IPR005697">
    <property type="entry name" value="HST_MetA"/>
</dbReference>
<dbReference type="InterPro" id="IPR033752">
    <property type="entry name" value="MetA_family"/>
</dbReference>
<dbReference type="NCBIfam" id="TIGR01001">
    <property type="entry name" value="metA"/>
    <property type="match status" value="1"/>
</dbReference>
<dbReference type="PANTHER" id="PTHR20919">
    <property type="entry name" value="HOMOSERINE O-SUCCINYLTRANSFERASE"/>
    <property type="match status" value="1"/>
</dbReference>
<dbReference type="PANTHER" id="PTHR20919:SF0">
    <property type="entry name" value="HOMOSERINE O-SUCCINYLTRANSFERASE"/>
    <property type="match status" value="1"/>
</dbReference>
<dbReference type="Pfam" id="PF04204">
    <property type="entry name" value="HTS"/>
    <property type="match status" value="1"/>
</dbReference>
<dbReference type="PIRSF" id="PIRSF000450">
    <property type="entry name" value="H_ser_succinyltr"/>
    <property type="match status" value="1"/>
</dbReference>
<dbReference type="SUPFAM" id="SSF52317">
    <property type="entry name" value="Class I glutamine amidotransferase-like"/>
    <property type="match status" value="1"/>
</dbReference>
<proteinExistence type="inferred from homology"/>
<protein>
    <recommendedName>
        <fullName evidence="1">Homoserine O-succinyltransferase</fullName>
        <shortName evidence="1">HST</shortName>
        <ecNumber evidence="1">2.3.1.46</ecNumber>
    </recommendedName>
    <alternativeName>
        <fullName evidence="1">Homoserine transsuccinylase</fullName>
        <shortName evidence="1">HTS</shortName>
    </alternativeName>
</protein>
<sequence>MPIKIPDQLPAAEVLGQENIFVMTESRAVTQNIRPLRVLILNLMPKKIETEIQLMRMLSNSPLQVDVDLLRIDDRESKNTPQAHLENFYHDFEQVRGNNYDGMIITGAPLGLVEFEEVVYWPRIVEIIEWSHQHVTSTLFLCWAVQAALKALYGMEKQTHGEKLSGVYRHHRLDENEPLLRGFDDEFVAPHSRYAAFDGDLIRAHTDLQIFAESEEAGVYLAATKDCRQVFVTGHPEYDVLTLDGEYQRDLAAGLDPVIPVNYYPNNDPALPPRASWRSHGHLLFSNWLNYYVYQLTSYRVEDIGKVFTYQQPK</sequence>
<gene>
    <name evidence="1" type="primary">metAS</name>
    <name type="ordered locus">ASA_3695</name>
</gene>
<accession>A4SRY4</accession>
<comment type="function">
    <text evidence="1">Transfers a succinyl group from succinyl-CoA to L-homoserine, forming succinyl-L-homoserine.</text>
</comment>
<comment type="catalytic activity">
    <reaction evidence="1">
        <text>L-homoserine + succinyl-CoA = O-succinyl-L-homoserine + CoA</text>
        <dbReference type="Rhea" id="RHEA:22008"/>
        <dbReference type="ChEBI" id="CHEBI:57287"/>
        <dbReference type="ChEBI" id="CHEBI:57292"/>
        <dbReference type="ChEBI" id="CHEBI:57476"/>
        <dbReference type="ChEBI" id="CHEBI:57661"/>
        <dbReference type="EC" id="2.3.1.46"/>
    </reaction>
</comment>
<comment type="pathway">
    <text evidence="1">Amino-acid biosynthesis; L-methionine biosynthesis via de novo pathway; O-succinyl-L-homoserine from L-homoserine: step 1/1.</text>
</comment>
<comment type="subcellular location">
    <subcellularLocation>
        <location evidence="1">Cytoplasm</location>
    </subcellularLocation>
</comment>
<comment type="similarity">
    <text evidence="1">Belongs to the MetA family.</text>
</comment>
<evidence type="ECO:0000255" key="1">
    <source>
        <dbReference type="HAMAP-Rule" id="MF_00295"/>
    </source>
</evidence>
<feature type="chain" id="PRO_1000021795" description="Homoserine O-succinyltransferase">
    <location>
        <begin position="1"/>
        <end position="314"/>
    </location>
</feature>
<feature type="active site" description="Acyl-thioester intermediate" evidence="1">
    <location>
        <position position="142"/>
    </location>
</feature>
<feature type="active site" description="Proton acceptor" evidence="1">
    <location>
        <position position="235"/>
    </location>
</feature>
<feature type="active site" evidence="1">
    <location>
        <position position="237"/>
    </location>
</feature>
<feature type="binding site" evidence="1">
    <location>
        <position position="163"/>
    </location>
    <ligand>
        <name>substrate</name>
    </ligand>
</feature>
<feature type="binding site" evidence="1">
    <location>
        <position position="192"/>
    </location>
    <ligand>
        <name>substrate</name>
    </ligand>
</feature>
<feature type="binding site" evidence="1">
    <location>
        <position position="249"/>
    </location>
    <ligand>
        <name>substrate</name>
    </ligand>
</feature>
<feature type="site" description="Important for acyl-CoA specificity" evidence="1">
    <location>
        <position position="111"/>
    </location>
</feature>
<feature type="site" description="Important for substrate specificity" evidence="1">
    <location>
        <position position="192"/>
    </location>
</feature>
<keyword id="KW-0012">Acyltransferase</keyword>
<keyword id="KW-0028">Amino-acid biosynthesis</keyword>
<keyword id="KW-0963">Cytoplasm</keyword>
<keyword id="KW-0486">Methionine biosynthesis</keyword>
<keyword id="KW-0808">Transferase</keyword>
<reference key="1">
    <citation type="journal article" date="2008" name="BMC Genomics">
        <title>The genome of Aeromonas salmonicida subsp. salmonicida A449: insights into the evolution of a fish pathogen.</title>
        <authorList>
            <person name="Reith M.E."/>
            <person name="Singh R.K."/>
            <person name="Curtis B."/>
            <person name="Boyd J.M."/>
            <person name="Bouevitch A."/>
            <person name="Kimball J."/>
            <person name="Munholland J."/>
            <person name="Murphy C."/>
            <person name="Sarty D."/>
            <person name="Williams J."/>
            <person name="Nash J.H."/>
            <person name="Johnson S.C."/>
            <person name="Brown L.L."/>
        </authorList>
    </citation>
    <scope>NUCLEOTIDE SEQUENCE [LARGE SCALE GENOMIC DNA]</scope>
    <source>
        <strain>A449</strain>
    </source>
</reference>